<name>NDUB4_CHICK</name>
<keyword id="KW-0249">Electron transport</keyword>
<keyword id="KW-0472">Membrane</keyword>
<keyword id="KW-0496">Mitochondrion</keyword>
<keyword id="KW-0999">Mitochondrion inner membrane</keyword>
<keyword id="KW-1185">Reference proteome</keyword>
<keyword id="KW-0679">Respiratory chain</keyword>
<keyword id="KW-0812">Transmembrane</keyword>
<keyword id="KW-1133">Transmembrane helix</keyword>
<keyword id="KW-0813">Transport</keyword>
<organism>
    <name type="scientific">Gallus gallus</name>
    <name type="common">Chicken</name>
    <dbReference type="NCBI Taxonomy" id="9031"/>
    <lineage>
        <taxon>Eukaryota</taxon>
        <taxon>Metazoa</taxon>
        <taxon>Chordata</taxon>
        <taxon>Craniata</taxon>
        <taxon>Vertebrata</taxon>
        <taxon>Euteleostomi</taxon>
        <taxon>Archelosauria</taxon>
        <taxon>Archosauria</taxon>
        <taxon>Dinosauria</taxon>
        <taxon>Saurischia</taxon>
        <taxon>Theropoda</taxon>
        <taxon>Coelurosauria</taxon>
        <taxon>Aves</taxon>
        <taxon>Neognathae</taxon>
        <taxon>Galloanserae</taxon>
        <taxon>Galliformes</taxon>
        <taxon>Phasianidae</taxon>
        <taxon>Phasianinae</taxon>
        <taxon>Gallus</taxon>
    </lineage>
</organism>
<reference key="1">
    <citation type="journal article" date="1993" name="Gene">
        <title>A chicken genomic DNA fragment that hybridizes to the murine Hox-3.1 homeobox is likely to encode the NADH ubiquinone oxidoreductase subunit B15.</title>
        <authorList>
            <person name="Goldberg G.S."/>
            <person name="Kaczmarczyk W."/>
        </authorList>
    </citation>
    <scope>NUCLEOTIDE SEQUENCE [GENOMIC DNA]</scope>
</reference>
<reference key="2">
    <citation type="journal article" date="1992" name="Gene">
        <title>Sequence of a novel chicken genomic DNA fragment that hybridizes to the murine Hox-3.1 homeobox.</title>
        <authorList>
            <person name="Goldberg G.S."/>
            <person name="Kaczmarczyk W."/>
        </authorList>
    </citation>
    <scope>NUCLEOTIDE SEQUENCE [GENOMIC DNA]</scope>
</reference>
<proteinExistence type="inferred from homology"/>
<comment type="function">
    <text evidence="1">Accessory subunit of the mitochondrial membrane respiratory chain NADH dehydrogenase (Complex I), that is believed not to be involved in catalysis. Complex I functions in the transfer of electrons from NADH to the respiratory chain. The immediate electron acceptor for the enzyme is believed to be ubiquinone.</text>
</comment>
<comment type="subunit">
    <text evidence="1">Complex I is composed of 45 different subunits.</text>
</comment>
<comment type="subcellular location">
    <subcellularLocation>
        <location evidence="1">Mitochondrion inner membrane</location>
        <topology evidence="2">Single-pass membrane protein</topology>
        <orientation evidence="1">Matrix side</orientation>
    </subcellularLocation>
</comment>
<comment type="similarity">
    <text evidence="3">Belongs to the complex I NDUFB4 subunit family.</text>
</comment>
<comment type="sequence caution" evidence="3">
    <conflict type="erroneous gene model prediction">
        <sequence resource="EMBL-CDS" id="AAA70193"/>
    </conflict>
</comment>
<comment type="sequence caution" evidence="3">
    <conflict type="erroneous gene model prediction">
        <sequence resource="EMBL-CDS" id="CAA43193"/>
    </conflict>
</comment>
<protein>
    <recommendedName>
        <fullName>NADH dehydrogenase [ubiquinone] 1 beta subcomplex subunit 4</fullName>
    </recommendedName>
    <alternativeName>
        <fullName>Complex I-B15</fullName>
        <shortName>CI-B15</shortName>
    </alternativeName>
    <alternativeName>
        <fullName>GGHPW</fullName>
    </alternativeName>
    <alternativeName>
        <fullName>NADH-ubiquinone oxidoreductase B15 subunit</fullName>
    </alternativeName>
    <alternativeName>
        <fullName>Protein Walter</fullName>
    </alternativeName>
</protein>
<feature type="chain" id="PRO_0000118802" description="NADH dehydrogenase [ubiquinone] 1 beta subcomplex subunit 4">
    <location>
        <begin position="1"/>
        <end position="133"/>
    </location>
</feature>
<feature type="transmembrane region" description="Helical" evidence="2">
    <location>
        <begin position="92"/>
        <end position="112"/>
    </location>
</feature>
<evidence type="ECO:0000250" key="1">
    <source>
        <dbReference type="UniProtKB" id="O95168"/>
    </source>
</evidence>
<evidence type="ECO:0000255" key="2"/>
<evidence type="ECO:0000305" key="3"/>
<accession>P48306</accession>
<gene>
    <name type="primary">NDUFB4</name>
</gene>
<dbReference type="EMBL" id="X60778">
    <property type="protein sequence ID" value="CAA43193.1"/>
    <property type="status" value="ALT_SEQ"/>
    <property type="molecule type" value="Genomic_DNA"/>
</dbReference>
<dbReference type="EMBL" id="M84354">
    <property type="protein sequence ID" value="AAA70193.1"/>
    <property type="status" value="ALT_SEQ"/>
    <property type="molecule type" value="Genomic_DNA"/>
</dbReference>
<dbReference type="PIR" id="A33164">
    <property type="entry name" value="A33164"/>
</dbReference>
<dbReference type="PIR" id="JC2003">
    <property type="entry name" value="JC2003"/>
</dbReference>
<dbReference type="SMR" id="P48306"/>
<dbReference type="FunCoup" id="P48306">
    <property type="interactions" value="1515"/>
</dbReference>
<dbReference type="STRING" id="9031.ENSGALP00000042287"/>
<dbReference type="PaxDb" id="9031-ENSGALP00000042287"/>
<dbReference type="VEuPathDB" id="HostDB:geneid_769954"/>
<dbReference type="eggNOG" id="ENOG502S2HF">
    <property type="taxonomic scope" value="Eukaryota"/>
</dbReference>
<dbReference type="InParanoid" id="P48306"/>
<dbReference type="OrthoDB" id="5818798at2759"/>
<dbReference type="PhylomeDB" id="P48306"/>
<dbReference type="PRO" id="PR:P48306"/>
<dbReference type="Proteomes" id="UP000000539">
    <property type="component" value="Unassembled WGS sequence"/>
</dbReference>
<dbReference type="GO" id="GO:0005743">
    <property type="term" value="C:mitochondrial inner membrane"/>
    <property type="evidence" value="ECO:0007669"/>
    <property type="project" value="UniProtKB-SubCell"/>
</dbReference>
<dbReference type="GO" id="GO:0045271">
    <property type="term" value="C:respiratory chain complex I"/>
    <property type="evidence" value="ECO:0000250"/>
    <property type="project" value="UniProtKB"/>
</dbReference>
<dbReference type="InterPro" id="IPR009866">
    <property type="entry name" value="NADH_UbQ_OxRdtase_NDUFB4_su"/>
</dbReference>
<dbReference type="PANTHER" id="PTHR15469:SF0">
    <property type="entry name" value="NADH DEHYDROGENASE [UBIQUINONE] 1 BETA SUBCOMPLEX SUBUNIT 4"/>
    <property type="match status" value="1"/>
</dbReference>
<dbReference type="PANTHER" id="PTHR15469">
    <property type="entry name" value="NADH-UBIQUINONE OXIDOREDUCTASE B15 SUBUNIT"/>
    <property type="match status" value="1"/>
</dbReference>
<dbReference type="Pfam" id="PF07225">
    <property type="entry name" value="NDUF_B4"/>
    <property type="match status" value="1"/>
</dbReference>
<sequence>MASGPSRTAAEEYRPNRYVSLPAELDPATYDTPLEKRRAEAERLAIRARLKRQYLLQLNTPKPPRVIEDPALLRWDYARTHNVYPTFRPTPKTSFLGAVFAIGPILFWIAAFKTERVSSAGGVEHQGAPGCKT</sequence>